<dbReference type="EMBL" id="CP001091">
    <property type="protein sequence ID" value="ACE61434.1"/>
    <property type="molecule type" value="Genomic_DNA"/>
</dbReference>
<dbReference type="RefSeq" id="WP_005597138.1">
    <property type="nucleotide sequence ID" value="NC_010939.1"/>
</dbReference>
<dbReference type="SMR" id="B3GXH5"/>
<dbReference type="KEGG" id="apa:APP7_0782"/>
<dbReference type="HOGENOM" id="CLU_105066_2_0_6"/>
<dbReference type="Proteomes" id="UP000001226">
    <property type="component" value="Chromosome"/>
</dbReference>
<dbReference type="GO" id="GO:0005694">
    <property type="term" value="C:chromosome"/>
    <property type="evidence" value="ECO:0007669"/>
    <property type="project" value="InterPro"/>
</dbReference>
<dbReference type="GO" id="GO:0005829">
    <property type="term" value="C:cytosol"/>
    <property type="evidence" value="ECO:0007669"/>
    <property type="project" value="TreeGrafter"/>
</dbReference>
<dbReference type="GO" id="GO:0003677">
    <property type="term" value="F:DNA binding"/>
    <property type="evidence" value="ECO:0007669"/>
    <property type="project" value="UniProtKB-UniRule"/>
</dbReference>
<dbReference type="GO" id="GO:0030527">
    <property type="term" value="F:structural constituent of chromatin"/>
    <property type="evidence" value="ECO:0007669"/>
    <property type="project" value="InterPro"/>
</dbReference>
<dbReference type="GO" id="GO:0006310">
    <property type="term" value="P:DNA recombination"/>
    <property type="evidence" value="ECO:0007669"/>
    <property type="project" value="UniProtKB-UniRule"/>
</dbReference>
<dbReference type="GO" id="GO:0006355">
    <property type="term" value="P:regulation of DNA-templated transcription"/>
    <property type="evidence" value="ECO:0007669"/>
    <property type="project" value="UniProtKB-UniRule"/>
</dbReference>
<dbReference type="GO" id="GO:0006417">
    <property type="term" value="P:regulation of translation"/>
    <property type="evidence" value="ECO:0007669"/>
    <property type="project" value="UniProtKB-UniRule"/>
</dbReference>
<dbReference type="CDD" id="cd13836">
    <property type="entry name" value="IHF_B"/>
    <property type="match status" value="1"/>
</dbReference>
<dbReference type="Gene3D" id="4.10.520.10">
    <property type="entry name" value="IHF-like DNA-binding proteins"/>
    <property type="match status" value="1"/>
</dbReference>
<dbReference type="HAMAP" id="MF_00381">
    <property type="entry name" value="IHF_beta"/>
    <property type="match status" value="1"/>
</dbReference>
<dbReference type="InterPro" id="IPR000119">
    <property type="entry name" value="Hist_DNA-bd"/>
</dbReference>
<dbReference type="InterPro" id="IPR020816">
    <property type="entry name" value="Histone-like_DNA-bd_CS"/>
</dbReference>
<dbReference type="InterPro" id="IPR010992">
    <property type="entry name" value="IHF-like_DNA-bd_dom_sf"/>
</dbReference>
<dbReference type="InterPro" id="IPR005685">
    <property type="entry name" value="IHF_beta"/>
</dbReference>
<dbReference type="NCBIfam" id="TIGR00988">
    <property type="entry name" value="hip"/>
    <property type="match status" value="1"/>
</dbReference>
<dbReference type="NCBIfam" id="NF001222">
    <property type="entry name" value="PRK00199.1"/>
    <property type="match status" value="1"/>
</dbReference>
<dbReference type="PANTHER" id="PTHR33175">
    <property type="entry name" value="DNA-BINDING PROTEIN HU"/>
    <property type="match status" value="1"/>
</dbReference>
<dbReference type="PANTHER" id="PTHR33175:SF5">
    <property type="entry name" value="INTEGRATION HOST FACTOR SUBUNIT BETA"/>
    <property type="match status" value="1"/>
</dbReference>
<dbReference type="Pfam" id="PF00216">
    <property type="entry name" value="Bac_DNA_binding"/>
    <property type="match status" value="1"/>
</dbReference>
<dbReference type="PRINTS" id="PR01727">
    <property type="entry name" value="DNABINDINGHU"/>
</dbReference>
<dbReference type="SMART" id="SM00411">
    <property type="entry name" value="BHL"/>
    <property type="match status" value="1"/>
</dbReference>
<dbReference type="SUPFAM" id="SSF47729">
    <property type="entry name" value="IHF-like DNA-binding proteins"/>
    <property type="match status" value="1"/>
</dbReference>
<dbReference type="PROSITE" id="PS00045">
    <property type="entry name" value="HISTONE_LIKE"/>
    <property type="match status" value="1"/>
</dbReference>
<proteinExistence type="inferred from homology"/>
<gene>
    <name evidence="1" type="primary">ihfB</name>
    <name evidence="1" type="synonym">himD</name>
    <name type="ordered locus">APP7_0782</name>
</gene>
<keyword id="KW-0233">DNA recombination</keyword>
<keyword id="KW-0238">DNA-binding</keyword>
<keyword id="KW-0804">Transcription</keyword>
<keyword id="KW-0805">Transcription regulation</keyword>
<keyword id="KW-0810">Translation regulation</keyword>
<organism>
    <name type="scientific">Actinobacillus pleuropneumoniae serotype 7 (strain AP76)</name>
    <dbReference type="NCBI Taxonomy" id="537457"/>
    <lineage>
        <taxon>Bacteria</taxon>
        <taxon>Pseudomonadati</taxon>
        <taxon>Pseudomonadota</taxon>
        <taxon>Gammaproteobacteria</taxon>
        <taxon>Pasteurellales</taxon>
        <taxon>Pasteurellaceae</taxon>
        <taxon>Actinobacillus</taxon>
    </lineage>
</organism>
<name>IHFB_ACTP7</name>
<evidence type="ECO:0000255" key="1">
    <source>
        <dbReference type="HAMAP-Rule" id="MF_00381"/>
    </source>
</evidence>
<reference key="1">
    <citation type="submission" date="2008-06" db="EMBL/GenBank/DDBJ databases">
        <title>Genome and proteome analysis of A. pleuropneumoniae serotype 7.</title>
        <authorList>
            <person name="Linke B."/>
            <person name="Buettner F."/>
            <person name="Martinez-Arias R."/>
            <person name="Goesmann A."/>
            <person name="Baltes N."/>
            <person name="Tegetmeyer H."/>
            <person name="Singh M."/>
            <person name="Gerlach G.F."/>
        </authorList>
    </citation>
    <scope>NUCLEOTIDE SEQUENCE [LARGE SCALE GENOMIC DNA]</scope>
    <source>
        <strain>AP76</strain>
    </source>
</reference>
<accession>B3GXH5</accession>
<protein>
    <recommendedName>
        <fullName evidence="1">Integration host factor subunit beta</fullName>
        <shortName evidence="1">IHF-beta</shortName>
    </recommendedName>
</protein>
<comment type="function">
    <text evidence="1">This protein is one of the two subunits of integration host factor, a specific DNA-binding protein that functions in genetic recombination as well as in transcriptional and translational control.</text>
</comment>
<comment type="subunit">
    <text evidence="1">Heterodimer of an alpha and a beta chain.</text>
</comment>
<comment type="similarity">
    <text evidence="1">Belongs to the bacterial histone-like protein family.</text>
</comment>
<sequence length="93" mass="10595">MTKSELIENLVSLNPALQVKSVEDGVKEILEQIMLFLERGERVEVRGFGSFSLHYRQPRVGRNPKTGESVKLDAKYVPHFKAGKDLKERVDLV</sequence>
<feature type="chain" id="PRO_1000122180" description="Integration host factor subunit beta">
    <location>
        <begin position="1"/>
        <end position="93"/>
    </location>
</feature>